<proteinExistence type="inferred from homology"/>
<gene>
    <name evidence="1" type="primary">acpP</name>
    <name type="ordered locus">llmg_1786</name>
</gene>
<evidence type="ECO:0000255" key="1">
    <source>
        <dbReference type="HAMAP-Rule" id="MF_01217"/>
    </source>
</evidence>
<evidence type="ECO:0000255" key="2">
    <source>
        <dbReference type="PROSITE-ProRule" id="PRU00258"/>
    </source>
</evidence>
<protein>
    <recommendedName>
        <fullName evidence="1">Acyl carrier protein</fullName>
        <shortName evidence="1">ACP</shortName>
    </recommendedName>
</protein>
<keyword id="KW-0963">Cytoplasm</keyword>
<keyword id="KW-0275">Fatty acid biosynthesis</keyword>
<keyword id="KW-0276">Fatty acid metabolism</keyword>
<keyword id="KW-0444">Lipid biosynthesis</keyword>
<keyword id="KW-0443">Lipid metabolism</keyword>
<keyword id="KW-0596">Phosphopantetheine</keyword>
<keyword id="KW-0597">Phosphoprotein</keyword>
<feature type="chain" id="PRO_1000066629" description="Acyl carrier protein">
    <location>
        <begin position="1"/>
        <end position="73"/>
    </location>
</feature>
<feature type="domain" description="Carrier" evidence="2">
    <location>
        <begin position="1"/>
        <end position="73"/>
    </location>
</feature>
<feature type="modified residue" description="O-(pantetheine 4'-phosphoryl)serine" evidence="2">
    <location>
        <position position="35"/>
    </location>
</feature>
<organism>
    <name type="scientific">Lactococcus lactis subsp. cremoris (strain MG1363)</name>
    <dbReference type="NCBI Taxonomy" id="416870"/>
    <lineage>
        <taxon>Bacteria</taxon>
        <taxon>Bacillati</taxon>
        <taxon>Bacillota</taxon>
        <taxon>Bacilli</taxon>
        <taxon>Lactobacillales</taxon>
        <taxon>Streptococcaceae</taxon>
        <taxon>Lactococcus</taxon>
        <taxon>Lactococcus cremoris subsp. cremoris</taxon>
    </lineage>
</organism>
<reference key="1">
    <citation type="journal article" date="2007" name="J. Bacteriol.">
        <title>The complete genome sequence of the lactic acid bacterial paradigm Lactococcus lactis subsp. cremoris MG1363.</title>
        <authorList>
            <person name="Wegmann U."/>
            <person name="O'Connell-Motherway M."/>
            <person name="Zomer A."/>
            <person name="Buist G."/>
            <person name="Shearman C."/>
            <person name="Canchaya C."/>
            <person name="Ventura M."/>
            <person name="Goesmann A."/>
            <person name="Gasson M.J."/>
            <person name="Kuipers O.P."/>
            <person name="van Sinderen D."/>
            <person name="Kok J."/>
        </authorList>
    </citation>
    <scope>NUCLEOTIDE SEQUENCE [LARGE SCALE GENOMIC DNA]</scope>
    <source>
        <strain>MG1363</strain>
    </source>
</reference>
<name>ACP_LACLM</name>
<sequence length="73" mass="8401">MAVFEKVQDIIVDELGKEKEEVTLETSFEELDADSLDLFQIINDIEDEFDVEVDTEADMKTVADLVKYVENNK</sequence>
<dbReference type="EMBL" id="AM406671">
    <property type="protein sequence ID" value="CAL98358.1"/>
    <property type="molecule type" value="Genomic_DNA"/>
</dbReference>
<dbReference type="RefSeq" id="WP_003132501.1">
    <property type="nucleotide sequence ID" value="NZ_WJVF01000003.1"/>
</dbReference>
<dbReference type="SMR" id="A2RM31"/>
<dbReference type="STRING" id="416870.llmg_1786"/>
<dbReference type="KEGG" id="llm:llmg_1786"/>
<dbReference type="eggNOG" id="COG0236">
    <property type="taxonomic scope" value="Bacteria"/>
</dbReference>
<dbReference type="HOGENOM" id="CLU_108696_5_0_9"/>
<dbReference type="OrthoDB" id="9804551at2"/>
<dbReference type="PhylomeDB" id="A2RM31"/>
<dbReference type="UniPathway" id="UPA00094"/>
<dbReference type="Proteomes" id="UP000000364">
    <property type="component" value="Chromosome"/>
</dbReference>
<dbReference type="GO" id="GO:0005737">
    <property type="term" value="C:cytoplasm"/>
    <property type="evidence" value="ECO:0007669"/>
    <property type="project" value="UniProtKB-SubCell"/>
</dbReference>
<dbReference type="GO" id="GO:0000036">
    <property type="term" value="F:acyl carrier activity"/>
    <property type="evidence" value="ECO:0007669"/>
    <property type="project" value="UniProtKB-UniRule"/>
</dbReference>
<dbReference type="Gene3D" id="1.10.1200.10">
    <property type="entry name" value="ACP-like"/>
    <property type="match status" value="1"/>
</dbReference>
<dbReference type="HAMAP" id="MF_01217">
    <property type="entry name" value="Acyl_carrier"/>
    <property type="match status" value="1"/>
</dbReference>
<dbReference type="InterPro" id="IPR003231">
    <property type="entry name" value="ACP"/>
</dbReference>
<dbReference type="InterPro" id="IPR036736">
    <property type="entry name" value="ACP-like_sf"/>
</dbReference>
<dbReference type="InterPro" id="IPR009081">
    <property type="entry name" value="PP-bd_ACP"/>
</dbReference>
<dbReference type="NCBIfam" id="NF002150">
    <property type="entry name" value="PRK00982.1-4"/>
    <property type="match status" value="1"/>
</dbReference>
<dbReference type="Pfam" id="PF00550">
    <property type="entry name" value="PP-binding"/>
    <property type="match status" value="1"/>
</dbReference>
<dbReference type="SUPFAM" id="SSF47336">
    <property type="entry name" value="ACP-like"/>
    <property type="match status" value="1"/>
</dbReference>
<dbReference type="PROSITE" id="PS50075">
    <property type="entry name" value="CARRIER"/>
    <property type="match status" value="1"/>
</dbReference>
<accession>A2RM31</accession>
<comment type="function">
    <text evidence="1">Carrier of the growing fatty acid chain in fatty acid biosynthesis.</text>
</comment>
<comment type="pathway">
    <text evidence="1">Lipid metabolism; fatty acid biosynthesis.</text>
</comment>
<comment type="subcellular location">
    <subcellularLocation>
        <location evidence="1">Cytoplasm</location>
    </subcellularLocation>
</comment>
<comment type="PTM">
    <text evidence="1">4'-phosphopantetheine is transferred from CoA to a specific serine of apo-ACP by AcpS. This modification is essential for activity because fatty acids are bound in thioester linkage to the sulfhydryl of the prosthetic group.</text>
</comment>
<comment type="similarity">
    <text evidence="1">Belongs to the acyl carrier protein (ACP) family.</text>
</comment>